<gene>
    <name type="primary">MCPA</name>
</gene>
<feature type="signal peptide" evidence="2">
    <location>
        <begin position="1"/>
        <end position="17"/>
    </location>
</feature>
<feature type="propeptide" id="PRO_0000384107" description="Activation peptide" evidence="1">
    <location>
        <begin position="18"/>
        <end position="112"/>
    </location>
</feature>
<feature type="chain" id="PRO_0000384108" description="Metallocarboxypeptidase A">
    <location>
        <begin position="113"/>
        <end position="422"/>
    </location>
</feature>
<feature type="domain" description="Peptidase M14" evidence="3">
    <location>
        <begin position="119"/>
        <end position="419"/>
    </location>
</feature>
<feature type="active site" description="Proton donor/acceptor" evidence="3">
    <location>
        <position position="385"/>
    </location>
</feature>
<feature type="binding site" evidence="1">
    <location>
        <begin position="179"/>
        <end position="182"/>
    </location>
    <ligand>
        <name>substrate</name>
    </ligand>
</feature>
<feature type="binding site" evidence="3">
    <location>
        <position position="179"/>
    </location>
    <ligand>
        <name>Zn(2+)</name>
        <dbReference type="ChEBI" id="CHEBI:29105"/>
        <note>catalytic</note>
    </ligand>
</feature>
<feature type="binding site" evidence="3">
    <location>
        <position position="182"/>
    </location>
    <ligand>
        <name>Zn(2+)</name>
        <dbReference type="ChEBI" id="CHEBI:29105"/>
        <note>catalytic</note>
    </ligand>
</feature>
<feature type="binding site" evidence="1">
    <location>
        <position position="237"/>
    </location>
    <ligand>
        <name>substrate</name>
    </ligand>
</feature>
<feature type="binding site" evidence="1">
    <location>
        <begin position="254"/>
        <end position="255"/>
    </location>
    <ligand>
        <name>substrate</name>
    </ligand>
</feature>
<feature type="binding site" evidence="3">
    <location>
        <position position="309"/>
    </location>
    <ligand>
        <name>Zn(2+)</name>
        <dbReference type="ChEBI" id="CHEBI:29105"/>
        <note>catalytic</note>
    </ligand>
</feature>
<feature type="binding site" evidence="1">
    <location>
        <begin position="310"/>
        <end position="311"/>
    </location>
    <ligand>
        <name>substrate</name>
    </ligand>
</feature>
<feature type="disulfide bond" evidence="1">
    <location>
        <begin position="248"/>
        <end position="271"/>
    </location>
</feature>
<name>MCPA_TRITO</name>
<accession>B6V865</accession>
<organism>
    <name type="scientific">Trichophyton tonsurans</name>
    <name type="common">Scalp ringworm fungus</name>
    <dbReference type="NCBI Taxonomy" id="34387"/>
    <lineage>
        <taxon>Eukaryota</taxon>
        <taxon>Fungi</taxon>
        <taxon>Dikarya</taxon>
        <taxon>Ascomycota</taxon>
        <taxon>Pezizomycotina</taxon>
        <taxon>Eurotiomycetes</taxon>
        <taxon>Eurotiomycetidae</taxon>
        <taxon>Onygenales</taxon>
        <taxon>Arthrodermataceae</taxon>
        <taxon>Trichophyton</taxon>
    </lineage>
</organism>
<evidence type="ECO:0000250" key="1"/>
<evidence type="ECO:0000255" key="2"/>
<evidence type="ECO:0000255" key="3">
    <source>
        <dbReference type="PROSITE-ProRule" id="PRU01379"/>
    </source>
</evidence>
<evidence type="ECO:0000305" key="4"/>
<sequence length="422" mass="47180">MRSVLSLALLAANVVTAAVVSPFDYSGYKVIRVPTQKDNVKEVQRIITDLNLDTWKYPKSEGQNADIVVPPSQITSFMERISGMSMEMMHEDLGMSISNETSFEAYSAGYAPDINWFKSYHSYQDHISYLQDLQGLFRTRSEYVDAGKSHEGRTIPALHIWGSGGKNSKPAIIFHGTIHAREWITTMVTEYLAWSLLSQYNKNADITSIVDNFDIWVFPIVNPDGFAFTQTSNRLWRKNRQPNPNARCPGRDLNRNYPYQWVGPGSSSNPCSDTYRGAQPGDGTEIKVHIANMKRIASYHGIAMFVDWHSYGQLFMSPYGYSCTARPPTDARHQELSRIFAQALRAVHGTPYRTGPICNTIYQVNGDSVDYALEVLKVKLSLTAELRDTGARGFVLPADQIVPSGEETLAGTVAMLKAVIRG</sequence>
<reference key="1">
    <citation type="submission" date="2008-10" db="EMBL/GenBank/DDBJ databases">
        <title>Comparing putative pathogenicity factors between Trichophyton tonsurans and Trichophyton equinum.</title>
        <authorList>
            <person name="Preuett B.L."/>
            <person name="Abdel-Rahman S.M."/>
        </authorList>
    </citation>
    <scope>NUCLEOTIDE SEQUENCE [GENOMIC DNA]</scope>
</reference>
<comment type="function">
    <text evidence="1">Extracellular metalloprotease that contributes to pathogenicity.</text>
</comment>
<comment type="cofactor">
    <cofactor evidence="1">
        <name>Zn(2+)</name>
        <dbReference type="ChEBI" id="CHEBI:29105"/>
    </cofactor>
    <text evidence="1">Binds 1 zinc ion per subunit.</text>
</comment>
<comment type="subcellular location">
    <subcellularLocation>
        <location evidence="1">Secreted</location>
    </subcellularLocation>
</comment>
<comment type="similarity">
    <text evidence="4">Belongs to the peptidase M14 family.</text>
</comment>
<protein>
    <recommendedName>
        <fullName>Metallocarboxypeptidase A</fullName>
        <shortName>MCPA</shortName>
        <ecNumber>3.4.17.-</ecNumber>
    </recommendedName>
    <alternativeName>
        <fullName>Carboxypeptidase M14A</fullName>
    </alternativeName>
</protein>
<dbReference type="EC" id="3.4.17.-"/>
<dbReference type="EMBL" id="FJ267688">
    <property type="protein sequence ID" value="ACJ06656.1"/>
    <property type="molecule type" value="Genomic_DNA"/>
</dbReference>
<dbReference type="SMR" id="B6V865"/>
<dbReference type="MEROPS" id="M14.014"/>
<dbReference type="VEuPathDB" id="FungiDB:TESG_00263"/>
<dbReference type="GO" id="GO:0005576">
    <property type="term" value="C:extracellular region"/>
    <property type="evidence" value="ECO:0007669"/>
    <property type="project" value="UniProtKB-SubCell"/>
</dbReference>
<dbReference type="GO" id="GO:0004181">
    <property type="term" value="F:metallocarboxypeptidase activity"/>
    <property type="evidence" value="ECO:0007669"/>
    <property type="project" value="InterPro"/>
</dbReference>
<dbReference type="GO" id="GO:0008270">
    <property type="term" value="F:zinc ion binding"/>
    <property type="evidence" value="ECO:0007669"/>
    <property type="project" value="InterPro"/>
</dbReference>
<dbReference type="GO" id="GO:0006508">
    <property type="term" value="P:proteolysis"/>
    <property type="evidence" value="ECO:0007669"/>
    <property type="project" value="UniProtKB-KW"/>
</dbReference>
<dbReference type="CDD" id="cd03860">
    <property type="entry name" value="M14_CP_A-B_like"/>
    <property type="match status" value="1"/>
</dbReference>
<dbReference type="FunFam" id="3.40.630.10:FF:000040">
    <property type="entry name" value="zinc carboxypeptidase"/>
    <property type="match status" value="1"/>
</dbReference>
<dbReference type="Gene3D" id="3.30.70.340">
    <property type="entry name" value="Metallocarboxypeptidase-like"/>
    <property type="match status" value="1"/>
</dbReference>
<dbReference type="Gene3D" id="3.40.630.10">
    <property type="entry name" value="Zn peptidases"/>
    <property type="match status" value="1"/>
</dbReference>
<dbReference type="InterPro" id="IPR036990">
    <property type="entry name" value="M14A-like_propep"/>
</dbReference>
<dbReference type="InterPro" id="IPR003146">
    <property type="entry name" value="M14A_act_pep"/>
</dbReference>
<dbReference type="InterPro" id="IPR000834">
    <property type="entry name" value="Peptidase_M14"/>
</dbReference>
<dbReference type="PANTHER" id="PTHR11705">
    <property type="entry name" value="PROTEASE FAMILY M14 CARBOXYPEPTIDASE A,B"/>
    <property type="match status" value="1"/>
</dbReference>
<dbReference type="PANTHER" id="PTHR11705:SF143">
    <property type="entry name" value="SLL0236 PROTEIN"/>
    <property type="match status" value="1"/>
</dbReference>
<dbReference type="Pfam" id="PF00246">
    <property type="entry name" value="Peptidase_M14"/>
    <property type="match status" value="1"/>
</dbReference>
<dbReference type="Pfam" id="PF02244">
    <property type="entry name" value="Propep_M14"/>
    <property type="match status" value="1"/>
</dbReference>
<dbReference type="PRINTS" id="PR00765">
    <property type="entry name" value="CRBOXYPTASEA"/>
</dbReference>
<dbReference type="SMART" id="SM00631">
    <property type="entry name" value="Zn_pept"/>
    <property type="match status" value="1"/>
</dbReference>
<dbReference type="SUPFAM" id="SSF54897">
    <property type="entry name" value="Protease propeptides/inhibitors"/>
    <property type="match status" value="1"/>
</dbReference>
<dbReference type="SUPFAM" id="SSF53187">
    <property type="entry name" value="Zn-dependent exopeptidases"/>
    <property type="match status" value="1"/>
</dbReference>
<dbReference type="PROSITE" id="PS00132">
    <property type="entry name" value="CARBOXYPEPT_ZN_1"/>
    <property type="match status" value="1"/>
</dbReference>
<dbReference type="PROSITE" id="PS52035">
    <property type="entry name" value="PEPTIDASE_M14"/>
    <property type="match status" value="1"/>
</dbReference>
<keyword id="KW-0121">Carboxypeptidase</keyword>
<keyword id="KW-1015">Disulfide bond</keyword>
<keyword id="KW-0378">Hydrolase</keyword>
<keyword id="KW-0479">Metal-binding</keyword>
<keyword id="KW-0482">Metalloprotease</keyword>
<keyword id="KW-0645">Protease</keyword>
<keyword id="KW-0964">Secreted</keyword>
<keyword id="KW-0732">Signal</keyword>
<keyword id="KW-0843">Virulence</keyword>
<keyword id="KW-0862">Zinc</keyword>
<keyword id="KW-0865">Zymogen</keyword>
<proteinExistence type="inferred from homology"/>